<accession>A0KV94</accession>
<keyword id="KW-0413">Isomerase</keyword>
<keyword id="KW-0819">tRNA processing</keyword>
<dbReference type="EC" id="5.4.99.12" evidence="1"/>
<dbReference type="EMBL" id="CP000469">
    <property type="protein sequence ID" value="ABK47713.1"/>
    <property type="molecule type" value="Genomic_DNA"/>
</dbReference>
<dbReference type="RefSeq" id="WP_011716536.1">
    <property type="nucleotide sequence ID" value="NC_008577.1"/>
</dbReference>
<dbReference type="SMR" id="A0KV94"/>
<dbReference type="STRING" id="94122.Shewana3_1479"/>
<dbReference type="KEGG" id="shn:Shewana3_1479"/>
<dbReference type="eggNOG" id="COG0101">
    <property type="taxonomic scope" value="Bacteria"/>
</dbReference>
<dbReference type="HOGENOM" id="CLU_014673_0_2_6"/>
<dbReference type="OrthoDB" id="9811823at2"/>
<dbReference type="Proteomes" id="UP000002589">
    <property type="component" value="Chromosome"/>
</dbReference>
<dbReference type="GO" id="GO:0003723">
    <property type="term" value="F:RNA binding"/>
    <property type="evidence" value="ECO:0007669"/>
    <property type="project" value="InterPro"/>
</dbReference>
<dbReference type="GO" id="GO:0160147">
    <property type="term" value="F:tRNA pseudouridine(38-40) synthase activity"/>
    <property type="evidence" value="ECO:0007669"/>
    <property type="project" value="UniProtKB-EC"/>
</dbReference>
<dbReference type="GO" id="GO:0031119">
    <property type="term" value="P:tRNA pseudouridine synthesis"/>
    <property type="evidence" value="ECO:0007669"/>
    <property type="project" value="UniProtKB-UniRule"/>
</dbReference>
<dbReference type="CDD" id="cd02570">
    <property type="entry name" value="PseudoU_synth_EcTruA"/>
    <property type="match status" value="1"/>
</dbReference>
<dbReference type="FunFam" id="3.30.70.580:FF:000001">
    <property type="entry name" value="tRNA pseudouridine synthase A"/>
    <property type="match status" value="1"/>
</dbReference>
<dbReference type="FunFam" id="3.30.70.660:FF:000001">
    <property type="entry name" value="tRNA pseudouridine synthase A"/>
    <property type="match status" value="1"/>
</dbReference>
<dbReference type="Gene3D" id="3.30.70.660">
    <property type="entry name" value="Pseudouridine synthase I, catalytic domain, C-terminal subdomain"/>
    <property type="match status" value="1"/>
</dbReference>
<dbReference type="Gene3D" id="3.30.70.580">
    <property type="entry name" value="Pseudouridine synthase I, catalytic domain, N-terminal subdomain"/>
    <property type="match status" value="1"/>
</dbReference>
<dbReference type="HAMAP" id="MF_00171">
    <property type="entry name" value="TruA"/>
    <property type="match status" value="1"/>
</dbReference>
<dbReference type="InterPro" id="IPR020103">
    <property type="entry name" value="PsdUridine_synth_cat_dom_sf"/>
</dbReference>
<dbReference type="InterPro" id="IPR001406">
    <property type="entry name" value="PsdUridine_synth_TruA"/>
</dbReference>
<dbReference type="InterPro" id="IPR020097">
    <property type="entry name" value="PsdUridine_synth_TruA_a/b_dom"/>
</dbReference>
<dbReference type="InterPro" id="IPR020095">
    <property type="entry name" value="PsdUridine_synth_TruA_C"/>
</dbReference>
<dbReference type="InterPro" id="IPR020094">
    <property type="entry name" value="TruA/RsuA/RluB/E/F_N"/>
</dbReference>
<dbReference type="NCBIfam" id="TIGR00071">
    <property type="entry name" value="hisT_truA"/>
    <property type="match status" value="1"/>
</dbReference>
<dbReference type="PANTHER" id="PTHR11142">
    <property type="entry name" value="PSEUDOURIDYLATE SYNTHASE"/>
    <property type="match status" value="1"/>
</dbReference>
<dbReference type="PANTHER" id="PTHR11142:SF0">
    <property type="entry name" value="TRNA PSEUDOURIDINE SYNTHASE-LIKE 1"/>
    <property type="match status" value="1"/>
</dbReference>
<dbReference type="Pfam" id="PF01416">
    <property type="entry name" value="PseudoU_synth_1"/>
    <property type="match status" value="2"/>
</dbReference>
<dbReference type="PIRSF" id="PIRSF001430">
    <property type="entry name" value="tRNA_psdUrid_synth"/>
    <property type="match status" value="1"/>
</dbReference>
<dbReference type="SUPFAM" id="SSF55120">
    <property type="entry name" value="Pseudouridine synthase"/>
    <property type="match status" value="1"/>
</dbReference>
<name>TRUA_SHESA</name>
<protein>
    <recommendedName>
        <fullName evidence="1">tRNA pseudouridine synthase A</fullName>
        <ecNumber evidence="1">5.4.99.12</ecNumber>
    </recommendedName>
    <alternativeName>
        <fullName evidence="1">tRNA pseudouridine(38-40) synthase</fullName>
    </alternativeName>
    <alternativeName>
        <fullName evidence="1">tRNA pseudouridylate synthase I</fullName>
    </alternativeName>
    <alternativeName>
        <fullName evidence="1">tRNA-uridine isomerase I</fullName>
    </alternativeName>
</protein>
<feature type="chain" id="PRO_1000017171" description="tRNA pseudouridine synthase A">
    <location>
        <begin position="1"/>
        <end position="261"/>
    </location>
</feature>
<feature type="active site" description="Nucleophile" evidence="1">
    <location>
        <position position="51"/>
    </location>
</feature>
<feature type="binding site" evidence="1">
    <location>
        <position position="109"/>
    </location>
    <ligand>
        <name>substrate</name>
    </ligand>
</feature>
<comment type="function">
    <text evidence="1">Formation of pseudouridine at positions 38, 39 and 40 in the anticodon stem and loop of transfer RNAs.</text>
</comment>
<comment type="catalytic activity">
    <reaction evidence="1">
        <text>uridine(38/39/40) in tRNA = pseudouridine(38/39/40) in tRNA</text>
        <dbReference type="Rhea" id="RHEA:22376"/>
        <dbReference type="Rhea" id="RHEA-COMP:10085"/>
        <dbReference type="Rhea" id="RHEA-COMP:10087"/>
        <dbReference type="ChEBI" id="CHEBI:65314"/>
        <dbReference type="ChEBI" id="CHEBI:65315"/>
        <dbReference type="EC" id="5.4.99.12"/>
    </reaction>
</comment>
<comment type="subunit">
    <text evidence="1">Homodimer.</text>
</comment>
<comment type="similarity">
    <text evidence="1">Belongs to the tRNA pseudouridine synthase TruA family.</text>
</comment>
<proteinExistence type="inferred from homology"/>
<organism>
    <name type="scientific">Shewanella sp. (strain ANA-3)</name>
    <dbReference type="NCBI Taxonomy" id="94122"/>
    <lineage>
        <taxon>Bacteria</taxon>
        <taxon>Pseudomonadati</taxon>
        <taxon>Pseudomonadota</taxon>
        <taxon>Gammaproteobacteria</taxon>
        <taxon>Alteromonadales</taxon>
        <taxon>Shewanellaceae</taxon>
        <taxon>Shewanella</taxon>
    </lineage>
</organism>
<reference key="1">
    <citation type="submission" date="2006-09" db="EMBL/GenBank/DDBJ databases">
        <title>Complete sequence of chromosome 1 of Shewanella sp. ANA-3.</title>
        <authorList>
            <person name="Copeland A."/>
            <person name="Lucas S."/>
            <person name="Lapidus A."/>
            <person name="Barry K."/>
            <person name="Detter J.C."/>
            <person name="Glavina del Rio T."/>
            <person name="Hammon N."/>
            <person name="Israni S."/>
            <person name="Dalin E."/>
            <person name="Tice H."/>
            <person name="Pitluck S."/>
            <person name="Chertkov O."/>
            <person name="Brettin T."/>
            <person name="Bruce D."/>
            <person name="Han C."/>
            <person name="Tapia R."/>
            <person name="Gilna P."/>
            <person name="Schmutz J."/>
            <person name="Larimer F."/>
            <person name="Land M."/>
            <person name="Hauser L."/>
            <person name="Kyrpides N."/>
            <person name="Kim E."/>
            <person name="Newman D."/>
            <person name="Salticov C."/>
            <person name="Konstantinidis K."/>
            <person name="Klappenback J."/>
            <person name="Tiedje J."/>
            <person name="Richardson P."/>
        </authorList>
    </citation>
    <scope>NUCLEOTIDE SEQUENCE [LARGE SCALE GENOMIC DNA]</scope>
    <source>
        <strain>ANA-3</strain>
    </source>
</reference>
<sequence>MRIALGIEYDGSGYFGWQRQAEVDSVQGQLEQALSKVANEPISLFCAGRTDAGVHATGQVVHFETNAIRNEGAWTLGVNANLPDNIAVRWAKEVDDTFHARFSATARRYRYVIYNHNFRPGILRHGVSHYHGDIDTDKMHVAAQALLGEQDFTSFRAIQCQSKTPFRNVHSVKVTRQGMYVIVDISANAFLHHMVRNIVGSLLEIGLGNQPLTWMADLLALKDRNQAAATAKPNGLYLVDVTYPEQYQLPKLALGPLFMLD</sequence>
<gene>
    <name evidence="1" type="primary">truA</name>
    <name type="ordered locus">Shewana3_1479</name>
</gene>
<evidence type="ECO:0000255" key="1">
    <source>
        <dbReference type="HAMAP-Rule" id="MF_00171"/>
    </source>
</evidence>